<organism>
    <name type="scientific">Escherichia coli O6:H1 (strain CFT073 / ATCC 700928 / UPEC)</name>
    <dbReference type="NCBI Taxonomy" id="199310"/>
    <lineage>
        <taxon>Bacteria</taxon>
        <taxon>Pseudomonadati</taxon>
        <taxon>Pseudomonadota</taxon>
        <taxon>Gammaproteobacteria</taxon>
        <taxon>Enterobacterales</taxon>
        <taxon>Enterobacteriaceae</taxon>
        <taxon>Escherichia</taxon>
    </lineage>
</organism>
<feature type="chain" id="PRO_0000202165" description="RNA-binding protein YhbY">
    <location>
        <begin position="1"/>
        <end position="97"/>
    </location>
</feature>
<feature type="domain" description="CRM" evidence="1">
    <location>
        <begin position="1"/>
        <end position="97"/>
    </location>
</feature>
<sequence>MNLSTKQKQHLKGLAHPLKPVVLLGSNGLTEGVLAEIEQALEHHELIKVKIATEDRETKTLIVEAIVRETGACNVQVIGKTLVLYRPTKERKISLPR</sequence>
<reference key="1">
    <citation type="journal article" date="2002" name="Proc. Natl. Acad. Sci. U.S.A.">
        <title>Extensive mosaic structure revealed by the complete genome sequence of uropathogenic Escherichia coli.</title>
        <authorList>
            <person name="Welch R.A."/>
            <person name="Burland V."/>
            <person name="Plunkett G. III"/>
            <person name="Redford P."/>
            <person name="Roesch P."/>
            <person name="Rasko D."/>
            <person name="Buckles E.L."/>
            <person name="Liou S.-R."/>
            <person name="Boutin A."/>
            <person name="Hackett J."/>
            <person name="Stroud D."/>
            <person name="Mayhew G.F."/>
            <person name="Rose D.J."/>
            <person name="Zhou S."/>
            <person name="Schwartz D.C."/>
            <person name="Perna N.T."/>
            <person name="Mobley H.L.T."/>
            <person name="Donnenberg M.S."/>
            <person name="Blattner F.R."/>
        </authorList>
    </citation>
    <scope>NUCLEOTIDE SEQUENCE [LARGE SCALE GENOMIC DNA]</scope>
    <source>
        <strain>CFT073 / ATCC 700928 / UPEC</strain>
    </source>
</reference>
<proteinExistence type="predicted"/>
<accession>P0AGK5</accession>
<accession>P42550</accession>
<gene>
    <name type="primary">yhbY</name>
    <name type="ordered locus">c3937</name>
</gene>
<protein>
    <recommendedName>
        <fullName>RNA-binding protein YhbY</fullName>
    </recommendedName>
</protein>
<keyword id="KW-1185">Reference proteome</keyword>
<keyword id="KW-0694">RNA-binding</keyword>
<dbReference type="EMBL" id="AE014075">
    <property type="protein sequence ID" value="AAN82377.1"/>
    <property type="molecule type" value="Genomic_DNA"/>
</dbReference>
<dbReference type="RefSeq" id="WP_001054420.1">
    <property type="nucleotide sequence ID" value="NZ_CP051263.1"/>
</dbReference>
<dbReference type="SMR" id="P0AGK5"/>
<dbReference type="STRING" id="199310.c3937"/>
<dbReference type="GeneID" id="93778801"/>
<dbReference type="KEGG" id="ecc:c3937"/>
<dbReference type="eggNOG" id="COG1534">
    <property type="taxonomic scope" value="Bacteria"/>
</dbReference>
<dbReference type="HOGENOM" id="CLU_095994_2_0_6"/>
<dbReference type="BioCyc" id="ECOL199310:C3937-MONOMER"/>
<dbReference type="Proteomes" id="UP000001410">
    <property type="component" value="Chromosome"/>
</dbReference>
<dbReference type="GO" id="GO:0003723">
    <property type="term" value="F:RNA binding"/>
    <property type="evidence" value="ECO:0007669"/>
    <property type="project" value="UniProtKB-KW"/>
</dbReference>
<dbReference type="FunFam" id="3.30.110.60:FF:000001">
    <property type="entry name" value="RNA-binding protein YhbY"/>
    <property type="match status" value="1"/>
</dbReference>
<dbReference type="Gene3D" id="3.30.110.60">
    <property type="entry name" value="YhbY-like"/>
    <property type="match status" value="1"/>
</dbReference>
<dbReference type="InterPro" id="IPR001890">
    <property type="entry name" value="RNA-binding_CRM"/>
</dbReference>
<dbReference type="InterPro" id="IPR051925">
    <property type="entry name" value="RNA-binding_domain"/>
</dbReference>
<dbReference type="InterPro" id="IPR017924">
    <property type="entry name" value="RNA-binding_YhbY"/>
</dbReference>
<dbReference type="InterPro" id="IPR035920">
    <property type="entry name" value="YhbY-like_sf"/>
</dbReference>
<dbReference type="NCBIfam" id="NF007669">
    <property type="entry name" value="PRK10343.1"/>
    <property type="match status" value="1"/>
</dbReference>
<dbReference type="NCBIfam" id="TIGR00253">
    <property type="entry name" value="RNA_bind_YhbY"/>
    <property type="match status" value="1"/>
</dbReference>
<dbReference type="PANTHER" id="PTHR40065">
    <property type="entry name" value="RNA-BINDING PROTEIN YHBY"/>
    <property type="match status" value="1"/>
</dbReference>
<dbReference type="PANTHER" id="PTHR40065:SF3">
    <property type="entry name" value="RNA-BINDING PROTEIN YHBY"/>
    <property type="match status" value="1"/>
</dbReference>
<dbReference type="Pfam" id="PF01985">
    <property type="entry name" value="CRS1_YhbY"/>
    <property type="match status" value="1"/>
</dbReference>
<dbReference type="SMART" id="SM01103">
    <property type="entry name" value="CRS1_YhbY"/>
    <property type="match status" value="1"/>
</dbReference>
<dbReference type="SUPFAM" id="SSF75471">
    <property type="entry name" value="YhbY-like"/>
    <property type="match status" value="1"/>
</dbReference>
<dbReference type="PROSITE" id="PS51295">
    <property type="entry name" value="CRM"/>
    <property type="match status" value="1"/>
</dbReference>
<name>YHBY_ECOL6</name>
<evidence type="ECO:0000255" key="1">
    <source>
        <dbReference type="PROSITE-ProRule" id="PRU00626"/>
    </source>
</evidence>